<evidence type="ECO:0000250" key="1">
    <source>
        <dbReference type="UniProtKB" id="O57173"/>
    </source>
</evidence>
<evidence type="ECO:0000250" key="2">
    <source>
        <dbReference type="UniProtKB" id="P24356"/>
    </source>
</evidence>
<evidence type="ECO:0000305" key="3"/>
<keyword id="KW-1035">Host cytoplasm</keyword>
<keyword id="KW-1043">Host membrane</keyword>
<keyword id="KW-1045">Host mitochondrion</keyword>
<keyword id="KW-1047">Host mitochondrion outer membrane</keyword>
<keyword id="KW-0945">Host-virus interaction</keyword>
<keyword id="KW-1081">Inhibition of host apoptosis by viral BCL2-like protein</keyword>
<keyword id="KW-0472">Membrane</keyword>
<keyword id="KW-1119">Modulation of host cell apoptosis by virus</keyword>
<comment type="function">
    <text evidence="2">Plays a role in evading host innate immune response by inhibiting host inflammasome activation. Interacts with and inhibits NLR-mediated interleukin-1 beta/IL1B production in infected cells. At the host mitochondria outer membrane, interacts with the BH3 domain of host BAK and prevents BAK from binding active BAX. In turn, host apoptosis is inhibited.</text>
</comment>
<comment type="subunit">
    <text evidence="1 2">Homodimer. Interacts with host pro-apoptotic protein BCL2L11 (via BH3 domain). Interacts with host NLRP1. Interacts with host BAK.</text>
</comment>
<comment type="subcellular location">
    <subcellularLocation>
        <location evidence="2">Host mitochondrion outer membrane</location>
    </subcellularLocation>
    <subcellularLocation>
        <location evidence="2">Host cytoplasm</location>
    </subcellularLocation>
</comment>
<comment type="induction">
    <text evidence="2">Expressed in the early phase of the viral replicative cycle.</text>
</comment>
<comment type="similarity">
    <text evidence="3">Belongs to the orthopoxvirus OPG045 family.</text>
</comment>
<reference key="1">
    <citation type="submission" date="1998-09" db="EMBL/GenBank/DDBJ databases">
        <title>Complete genomic sequence of vaccinia virus (Tian Tan strain).</title>
        <authorList>
            <person name="Jin Q."/>
            <person name="Hou Y.D."/>
            <person name="Cheng N.H."/>
            <person name="Yao E.M."/>
            <person name="Cheng S.X."/>
            <person name="Yang X.K."/>
            <person name="Jing D.Y."/>
            <person name="Yu W.H."/>
            <person name="Yuan J.S."/>
            <person name="Ma X.J."/>
        </authorList>
    </citation>
    <scope>NUCLEOTIDE SEQUENCE [LARGE SCALE GENOMIC DNA]</scope>
</reference>
<gene>
    <name type="primary">OPG045</name>
    <name type="ORF">TF1L</name>
</gene>
<proteinExistence type="inferred from homology"/>
<dbReference type="EMBL" id="AF095689">
    <property type="protein sequence ID" value="AAF33891.1"/>
    <property type="molecule type" value="Genomic_DNA"/>
</dbReference>
<dbReference type="SMR" id="Q9JFF2"/>
<dbReference type="MEROPS" id="I91.001"/>
<dbReference type="Proteomes" id="UP000163220">
    <property type="component" value="Genome"/>
</dbReference>
<dbReference type="GO" id="GO:0044193">
    <property type="term" value="C:host cell mitochondrial outer membrane"/>
    <property type="evidence" value="ECO:0007669"/>
    <property type="project" value="UniProtKB-SubCell"/>
</dbReference>
<dbReference type="GO" id="GO:0016020">
    <property type="term" value="C:membrane"/>
    <property type="evidence" value="ECO:0007669"/>
    <property type="project" value="UniProtKB-KW"/>
</dbReference>
<dbReference type="GO" id="GO:0042981">
    <property type="term" value="P:regulation of apoptotic process"/>
    <property type="evidence" value="ECO:0007669"/>
    <property type="project" value="InterPro"/>
</dbReference>
<dbReference type="GO" id="GO:0033668">
    <property type="term" value="P:symbiont-mediated suppression of host apoptosis"/>
    <property type="evidence" value="ECO:0007669"/>
    <property type="project" value="UniProtKB-KW"/>
</dbReference>
<dbReference type="FunFam" id="1.10.437.10:FF:000013">
    <property type="entry name" value="Protein F1"/>
    <property type="match status" value="1"/>
</dbReference>
<dbReference type="Gene3D" id="1.10.437.10">
    <property type="entry name" value="Blc2-like"/>
    <property type="match status" value="1"/>
</dbReference>
<dbReference type="InterPro" id="IPR036834">
    <property type="entry name" value="Bcl-2-like_sf"/>
</dbReference>
<dbReference type="InterPro" id="IPR011207">
    <property type="entry name" value="Orthopox_F1"/>
</dbReference>
<dbReference type="InterPro" id="IPR021119">
    <property type="entry name" value="Poxvirus_F1/C10"/>
</dbReference>
<dbReference type="Pfam" id="PF11099">
    <property type="entry name" value="M11L"/>
    <property type="match status" value="1"/>
</dbReference>
<dbReference type="PIRSF" id="PIRSF015971">
    <property type="entry name" value="VAC_F1L"/>
    <property type="match status" value="1"/>
</dbReference>
<sequence>MLSMFMCNNIVDYVDDIDNGIVQDIEDEASNNVDRDYVYPLPENMVYRFDKSTNILDYLSTERDHVMMAVRYYMSKQRLDDLYRQLPTKTRSYIDIINIYCDKVSNDYNRDMNIMYDMASTKSFTVYDINNEVNTILMDNKGLGVRLATISFITELGRRCMNPVKTIKMFTLLSHTICDDCFVDYITDISPPDNTIPNTSTREYLKLIGITAIMFATYKTLKYMIG</sequence>
<feature type="chain" id="PRO_0000099475" description="Apoptosis regulator OPG045">
    <location>
        <begin position="1"/>
        <end position="226"/>
    </location>
</feature>
<accession>Q9JFF2</accession>
<organismHost>
    <name type="scientific">Homo sapiens</name>
    <name type="common">Human</name>
    <dbReference type="NCBI Taxonomy" id="9606"/>
</organismHost>
<protein>
    <recommendedName>
        <fullName>Apoptosis regulator OPG045</fullName>
    </recommendedName>
    <alternativeName>
        <fullName>Protein F1</fullName>
    </alternativeName>
</protein>
<name>PG045_VACCT</name>
<organism>
    <name type="scientific">Vaccinia virus (strain Tian Tan)</name>
    <name type="common">VACV</name>
    <dbReference type="NCBI Taxonomy" id="10253"/>
    <lineage>
        <taxon>Viruses</taxon>
        <taxon>Varidnaviria</taxon>
        <taxon>Bamfordvirae</taxon>
        <taxon>Nucleocytoviricota</taxon>
        <taxon>Pokkesviricetes</taxon>
        <taxon>Chitovirales</taxon>
        <taxon>Poxviridae</taxon>
        <taxon>Chordopoxvirinae</taxon>
        <taxon>Orthopoxvirus</taxon>
        <taxon>Vaccinia virus</taxon>
    </lineage>
</organism>